<evidence type="ECO:0000255" key="1">
    <source>
        <dbReference type="HAMAP-Rule" id="MF_00014"/>
    </source>
</evidence>
<keyword id="KW-0143">Chaperone</keyword>
<keyword id="KW-0963">Cytoplasm</keyword>
<keyword id="KW-1185">Reference proteome</keyword>
<keyword id="KW-0690">Ribosome biogenesis</keyword>
<keyword id="KW-0698">rRNA processing</keyword>
<gene>
    <name evidence="1" type="primary">rimM</name>
    <name type="ordered locus">Sfri_2919</name>
</gene>
<name>RIMM_SHEFN</name>
<reference key="1">
    <citation type="submission" date="2006-08" db="EMBL/GenBank/DDBJ databases">
        <title>Complete sequence of Shewanella frigidimarina NCIMB 400.</title>
        <authorList>
            <consortium name="US DOE Joint Genome Institute"/>
            <person name="Copeland A."/>
            <person name="Lucas S."/>
            <person name="Lapidus A."/>
            <person name="Barry K."/>
            <person name="Detter J.C."/>
            <person name="Glavina del Rio T."/>
            <person name="Hammon N."/>
            <person name="Israni S."/>
            <person name="Dalin E."/>
            <person name="Tice H."/>
            <person name="Pitluck S."/>
            <person name="Fredrickson J.K."/>
            <person name="Kolker E."/>
            <person name="McCuel L.A."/>
            <person name="DiChristina T."/>
            <person name="Nealson K.H."/>
            <person name="Newman D."/>
            <person name="Tiedje J.M."/>
            <person name="Zhou J."/>
            <person name="Romine M.F."/>
            <person name="Culley D.E."/>
            <person name="Serres M."/>
            <person name="Chertkov O."/>
            <person name="Brettin T."/>
            <person name="Bruce D."/>
            <person name="Han C."/>
            <person name="Tapia R."/>
            <person name="Gilna P."/>
            <person name="Schmutz J."/>
            <person name="Larimer F."/>
            <person name="Land M."/>
            <person name="Hauser L."/>
            <person name="Kyrpides N."/>
            <person name="Mikhailova N."/>
            <person name="Richardson P."/>
        </authorList>
    </citation>
    <scope>NUCLEOTIDE SEQUENCE [LARGE SCALE GENOMIC DNA]</scope>
    <source>
        <strain>NCIMB 400</strain>
    </source>
</reference>
<proteinExistence type="inferred from homology"/>
<feature type="chain" id="PRO_0000321756" description="Ribosome maturation factor RimM">
    <location>
        <begin position="1"/>
        <end position="176"/>
    </location>
</feature>
<feature type="domain" description="PRC barrel" evidence="1">
    <location>
        <begin position="97"/>
        <end position="176"/>
    </location>
</feature>
<protein>
    <recommendedName>
        <fullName evidence="1">Ribosome maturation factor RimM</fullName>
    </recommendedName>
</protein>
<organism>
    <name type="scientific">Shewanella frigidimarina (strain NCIMB 400)</name>
    <dbReference type="NCBI Taxonomy" id="318167"/>
    <lineage>
        <taxon>Bacteria</taxon>
        <taxon>Pseudomonadati</taxon>
        <taxon>Pseudomonadota</taxon>
        <taxon>Gammaproteobacteria</taxon>
        <taxon>Alteromonadales</taxon>
        <taxon>Shewanellaceae</taxon>
        <taxon>Shewanella</taxon>
    </lineage>
</organism>
<accession>Q07Z06</accession>
<dbReference type="EMBL" id="CP000447">
    <property type="protein sequence ID" value="ABI72758.1"/>
    <property type="molecule type" value="Genomic_DNA"/>
</dbReference>
<dbReference type="RefSeq" id="WP_011638367.1">
    <property type="nucleotide sequence ID" value="NC_008345.1"/>
</dbReference>
<dbReference type="SMR" id="Q07Z06"/>
<dbReference type="STRING" id="318167.Sfri_2919"/>
<dbReference type="KEGG" id="sfr:Sfri_2919"/>
<dbReference type="eggNOG" id="COG0806">
    <property type="taxonomic scope" value="Bacteria"/>
</dbReference>
<dbReference type="HOGENOM" id="CLU_077636_1_0_6"/>
<dbReference type="OrthoDB" id="9783509at2"/>
<dbReference type="Proteomes" id="UP000000684">
    <property type="component" value="Chromosome"/>
</dbReference>
<dbReference type="GO" id="GO:0005737">
    <property type="term" value="C:cytoplasm"/>
    <property type="evidence" value="ECO:0007669"/>
    <property type="project" value="UniProtKB-SubCell"/>
</dbReference>
<dbReference type="GO" id="GO:0005840">
    <property type="term" value="C:ribosome"/>
    <property type="evidence" value="ECO:0007669"/>
    <property type="project" value="InterPro"/>
</dbReference>
<dbReference type="GO" id="GO:0043022">
    <property type="term" value="F:ribosome binding"/>
    <property type="evidence" value="ECO:0007669"/>
    <property type="project" value="InterPro"/>
</dbReference>
<dbReference type="GO" id="GO:0042274">
    <property type="term" value="P:ribosomal small subunit biogenesis"/>
    <property type="evidence" value="ECO:0007669"/>
    <property type="project" value="UniProtKB-UniRule"/>
</dbReference>
<dbReference type="GO" id="GO:0006364">
    <property type="term" value="P:rRNA processing"/>
    <property type="evidence" value="ECO:0007669"/>
    <property type="project" value="UniProtKB-UniRule"/>
</dbReference>
<dbReference type="Gene3D" id="2.30.30.240">
    <property type="entry name" value="PRC-barrel domain"/>
    <property type="match status" value="1"/>
</dbReference>
<dbReference type="Gene3D" id="2.40.30.60">
    <property type="entry name" value="RimM"/>
    <property type="match status" value="1"/>
</dbReference>
<dbReference type="HAMAP" id="MF_00014">
    <property type="entry name" value="Ribosome_mat_RimM"/>
    <property type="match status" value="1"/>
</dbReference>
<dbReference type="InterPro" id="IPR011033">
    <property type="entry name" value="PRC_barrel-like_sf"/>
</dbReference>
<dbReference type="InterPro" id="IPR056792">
    <property type="entry name" value="PRC_RimM"/>
</dbReference>
<dbReference type="InterPro" id="IPR011961">
    <property type="entry name" value="RimM"/>
</dbReference>
<dbReference type="InterPro" id="IPR002676">
    <property type="entry name" value="RimM_N"/>
</dbReference>
<dbReference type="InterPro" id="IPR036976">
    <property type="entry name" value="RimM_N_sf"/>
</dbReference>
<dbReference type="InterPro" id="IPR009000">
    <property type="entry name" value="Transl_B-barrel_sf"/>
</dbReference>
<dbReference type="NCBIfam" id="TIGR02273">
    <property type="entry name" value="16S_RimM"/>
    <property type="match status" value="1"/>
</dbReference>
<dbReference type="PANTHER" id="PTHR33692">
    <property type="entry name" value="RIBOSOME MATURATION FACTOR RIMM"/>
    <property type="match status" value="1"/>
</dbReference>
<dbReference type="PANTHER" id="PTHR33692:SF1">
    <property type="entry name" value="RIBOSOME MATURATION FACTOR RIMM"/>
    <property type="match status" value="1"/>
</dbReference>
<dbReference type="Pfam" id="PF24986">
    <property type="entry name" value="PRC_RimM"/>
    <property type="match status" value="1"/>
</dbReference>
<dbReference type="Pfam" id="PF01782">
    <property type="entry name" value="RimM"/>
    <property type="match status" value="1"/>
</dbReference>
<dbReference type="SUPFAM" id="SSF50346">
    <property type="entry name" value="PRC-barrel domain"/>
    <property type="match status" value="1"/>
</dbReference>
<dbReference type="SUPFAM" id="SSF50447">
    <property type="entry name" value="Translation proteins"/>
    <property type="match status" value="1"/>
</dbReference>
<comment type="function">
    <text evidence="1">An accessory protein needed during the final step in the assembly of 30S ribosomal subunit, possibly for assembly of the head region. Essential for efficient processing of 16S rRNA. May be needed both before and after RbfA during the maturation of 16S rRNA. It has affinity for free ribosomal 30S subunits but not for 70S ribosomes.</text>
</comment>
<comment type="subunit">
    <text evidence="1">Binds ribosomal protein uS19.</text>
</comment>
<comment type="subcellular location">
    <subcellularLocation>
        <location evidence="1">Cytoplasm</location>
    </subcellularLocation>
</comment>
<comment type="domain">
    <text evidence="1">The PRC barrel domain binds ribosomal protein uS19.</text>
</comment>
<comment type="similarity">
    <text evidence="1">Belongs to the RimM family.</text>
</comment>
<sequence length="176" mass="19895">MSSNQELVVLGKLGSSHGIKGWLKITSYTDSVEGIFDYSPWLIKEQGVWREVKVAQWRFQGKAVVAELEGVATREHAQMLTNCEIAIMPEQMKDLDDSEFYHRDLIGCEVTNINGYNMGIVDQIVETGSNDVLLIKANAKDAFGKAERMIPFVPEQFIKQVDLQGKQILVDWDPDF</sequence>